<evidence type="ECO:0000255" key="1">
    <source>
        <dbReference type="HAMAP-Rule" id="MF_01445"/>
    </source>
</evidence>
<name>TSAD_ECTM1</name>
<keyword id="KW-0012">Acyltransferase</keyword>
<keyword id="KW-0963">Cytoplasm</keyword>
<keyword id="KW-0408">Iron</keyword>
<keyword id="KW-0479">Metal-binding</keyword>
<keyword id="KW-0808">Transferase</keyword>
<keyword id="KW-0819">tRNA processing</keyword>
<reference key="1">
    <citation type="submission" date="2007-04" db="EMBL/GenBank/DDBJ databases">
        <title>Complete sequence of Pseudomonas mendocina ymp.</title>
        <authorList>
            <consortium name="US DOE Joint Genome Institute"/>
            <person name="Copeland A."/>
            <person name="Lucas S."/>
            <person name="Lapidus A."/>
            <person name="Barry K."/>
            <person name="Glavina del Rio T."/>
            <person name="Dalin E."/>
            <person name="Tice H."/>
            <person name="Pitluck S."/>
            <person name="Kiss H."/>
            <person name="Brettin T."/>
            <person name="Detter J.C."/>
            <person name="Bruce D."/>
            <person name="Han C."/>
            <person name="Schmutz J."/>
            <person name="Larimer F."/>
            <person name="Land M."/>
            <person name="Hauser L."/>
            <person name="Kyrpides N."/>
            <person name="Mikhailova N."/>
            <person name="Hersman L."/>
            <person name="Dubois J."/>
            <person name="Maurice P."/>
            <person name="Richardson P."/>
        </authorList>
    </citation>
    <scope>NUCLEOTIDE SEQUENCE [LARGE SCALE GENOMIC DNA]</scope>
    <source>
        <strain>ymp</strain>
    </source>
</reference>
<organism>
    <name type="scientific">Ectopseudomonas mendocina (strain ymp)</name>
    <name type="common">Pseudomonas mendocina</name>
    <dbReference type="NCBI Taxonomy" id="399739"/>
    <lineage>
        <taxon>Bacteria</taxon>
        <taxon>Pseudomonadati</taxon>
        <taxon>Pseudomonadota</taxon>
        <taxon>Gammaproteobacteria</taxon>
        <taxon>Pseudomonadales</taxon>
        <taxon>Pseudomonadaceae</taxon>
        <taxon>Ectopseudomonas</taxon>
    </lineage>
</organism>
<sequence>MLVLGLETSCDETGVALYDSERGLLADALFSQIDLHRIYGGVVPELASRDHVKRMLPLIRQVLDEAGREPSDIDALAYTAGPGLVGALLVGASCAQALAFAWGVPAVGVHHMEGHLLAPMLEEQPPAFPFVALLVSGGHTQLVRVDGIGQYQLLGESLDDAAGEAFDKTAKLMGLNYPGGPEIAKLAEQGTPGRFVFPRPMTDRPGLDFSFSGLKTFALNTWQQCRDSGDDLDQARRDIALAFQQAVVETLTIKCKRALKQTGLNSLVIAGGVSANKALREHLERMLGELKGKVFYARPRFCTDNGAMIAYAGCQRLLAGQHEDLAIKVQARWPMESLPAL</sequence>
<feature type="chain" id="PRO_1000024441" description="tRNA N6-adenosine threonylcarbamoyltransferase">
    <location>
        <begin position="1"/>
        <end position="341"/>
    </location>
</feature>
<feature type="binding site" evidence="1">
    <location>
        <position position="111"/>
    </location>
    <ligand>
        <name>Fe cation</name>
        <dbReference type="ChEBI" id="CHEBI:24875"/>
    </ligand>
</feature>
<feature type="binding site" evidence="1">
    <location>
        <position position="115"/>
    </location>
    <ligand>
        <name>Fe cation</name>
        <dbReference type="ChEBI" id="CHEBI:24875"/>
    </ligand>
</feature>
<feature type="binding site" evidence="1">
    <location>
        <begin position="134"/>
        <end position="138"/>
    </location>
    <ligand>
        <name>substrate</name>
    </ligand>
</feature>
<feature type="binding site" evidence="1">
    <location>
        <position position="167"/>
    </location>
    <ligand>
        <name>substrate</name>
    </ligand>
</feature>
<feature type="binding site" evidence="1">
    <location>
        <position position="180"/>
    </location>
    <ligand>
        <name>substrate</name>
    </ligand>
</feature>
<feature type="binding site" evidence="1">
    <location>
        <position position="276"/>
    </location>
    <ligand>
        <name>substrate</name>
    </ligand>
</feature>
<feature type="binding site" evidence="1">
    <location>
        <position position="304"/>
    </location>
    <ligand>
        <name>Fe cation</name>
        <dbReference type="ChEBI" id="CHEBI:24875"/>
    </ligand>
</feature>
<proteinExistence type="inferred from homology"/>
<gene>
    <name evidence="1" type="primary">tsaD</name>
    <name type="synonym">gcp</name>
    <name type="ordered locus">Pmen_4025</name>
</gene>
<comment type="function">
    <text evidence="1">Required for the formation of a threonylcarbamoyl group on adenosine at position 37 (t(6)A37) in tRNAs that read codons beginning with adenine. Is involved in the transfer of the threonylcarbamoyl moiety of threonylcarbamoyl-AMP (TC-AMP) to the N6 group of A37, together with TsaE and TsaB. TsaD likely plays a direct catalytic role in this reaction.</text>
</comment>
<comment type="catalytic activity">
    <reaction evidence="1">
        <text>L-threonylcarbamoyladenylate + adenosine(37) in tRNA = N(6)-L-threonylcarbamoyladenosine(37) in tRNA + AMP + H(+)</text>
        <dbReference type="Rhea" id="RHEA:37059"/>
        <dbReference type="Rhea" id="RHEA-COMP:10162"/>
        <dbReference type="Rhea" id="RHEA-COMP:10163"/>
        <dbReference type="ChEBI" id="CHEBI:15378"/>
        <dbReference type="ChEBI" id="CHEBI:73682"/>
        <dbReference type="ChEBI" id="CHEBI:74411"/>
        <dbReference type="ChEBI" id="CHEBI:74418"/>
        <dbReference type="ChEBI" id="CHEBI:456215"/>
        <dbReference type="EC" id="2.3.1.234"/>
    </reaction>
</comment>
<comment type="cofactor">
    <cofactor evidence="1">
        <name>Fe(2+)</name>
        <dbReference type="ChEBI" id="CHEBI:29033"/>
    </cofactor>
    <text evidence="1">Binds 1 Fe(2+) ion per subunit.</text>
</comment>
<comment type="subcellular location">
    <subcellularLocation>
        <location evidence="1">Cytoplasm</location>
    </subcellularLocation>
</comment>
<comment type="similarity">
    <text evidence="1">Belongs to the KAE1 / TsaD family.</text>
</comment>
<accession>A4XZK6</accession>
<dbReference type="EC" id="2.3.1.234" evidence="1"/>
<dbReference type="EMBL" id="CP000680">
    <property type="protein sequence ID" value="ABP86772.1"/>
    <property type="molecule type" value="Genomic_DNA"/>
</dbReference>
<dbReference type="SMR" id="A4XZK6"/>
<dbReference type="STRING" id="399739.Pmen_4025"/>
<dbReference type="KEGG" id="pmy:Pmen_4025"/>
<dbReference type="PATRIC" id="fig|399739.8.peg.4078"/>
<dbReference type="eggNOG" id="COG0533">
    <property type="taxonomic scope" value="Bacteria"/>
</dbReference>
<dbReference type="HOGENOM" id="CLU_023208_0_0_6"/>
<dbReference type="OrthoDB" id="9806197at2"/>
<dbReference type="GO" id="GO:0005737">
    <property type="term" value="C:cytoplasm"/>
    <property type="evidence" value="ECO:0007669"/>
    <property type="project" value="UniProtKB-SubCell"/>
</dbReference>
<dbReference type="GO" id="GO:0005506">
    <property type="term" value="F:iron ion binding"/>
    <property type="evidence" value="ECO:0007669"/>
    <property type="project" value="UniProtKB-UniRule"/>
</dbReference>
<dbReference type="GO" id="GO:0061711">
    <property type="term" value="F:N(6)-L-threonylcarbamoyladenine synthase activity"/>
    <property type="evidence" value="ECO:0007669"/>
    <property type="project" value="UniProtKB-EC"/>
</dbReference>
<dbReference type="GO" id="GO:0002949">
    <property type="term" value="P:tRNA threonylcarbamoyladenosine modification"/>
    <property type="evidence" value="ECO:0007669"/>
    <property type="project" value="UniProtKB-UniRule"/>
</dbReference>
<dbReference type="CDD" id="cd24133">
    <property type="entry name" value="ASKHA_NBD_TsaD_bac"/>
    <property type="match status" value="1"/>
</dbReference>
<dbReference type="FunFam" id="3.30.420.40:FF:000012">
    <property type="entry name" value="tRNA N6-adenosine threonylcarbamoyltransferase"/>
    <property type="match status" value="1"/>
</dbReference>
<dbReference type="FunFam" id="3.30.420.40:FF:000031">
    <property type="entry name" value="tRNA N6-adenosine threonylcarbamoyltransferase"/>
    <property type="match status" value="1"/>
</dbReference>
<dbReference type="Gene3D" id="3.30.420.40">
    <property type="match status" value="2"/>
</dbReference>
<dbReference type="HAMAP" id="MF_01445">
    <property type="entry name" value="TsaD"/>
    <property type="match status" value="1"/>
</dbReference>
<dbReference type="InterPro" id="IPR043129">
    <property type="entry name" value="ATPase_NBD"/>
</dbReference>
<dbReference type="InterPro" id="IPR000905">
    <property type="entry name" value="Gcp-like_dom"/>
</dbReference>
<dbReference type="InterPro" id="IPR017861">
    <property type="entry name" value="KAE1/TsaD"/>
</dbReference>
<dbReference type="InterPro" id="IPR022450">
    <property type="entry name" value="TsaD"/>
</dbReference>
<dbReference type="NCBIfam" id="TIGR00329">
    <property type="entry name" value="gcp_kae1"/>
    <property type="match status" value="1"/>
</dbReference>
<dbReference type="NCBIfam" id="TIGR03723">
    <property type="entry name" value="T6A_TsaD_YgjD"/>
    <property type="match status" value="1"/>
</dbReference>
<dbReference type="PANTHER" id="PTHR11735">
    <property type="entry name" value="TRNA N6-ADENOSINE THREONYLCARBAMOYLTRANSFERASE"/>
    <property type="match status" value="1"/>
</dbReference>
<dbReference type="PANTHER" id="PTHR11735:SF6">
    <property type="entry name" value="TRNA N6-ADENOSINE THREONYLCARBAMOYLTRANSFERASE, MITOCHONDRIAL"/>
    <property type="match status" value="1"/>
</dbReference>
<dbReference type="Pfam" id="PF00814">
    <property type="entry name" value="TsaD"/>
    <property type="match status" value="1"/>
</dbReference>
<dbReference type="PRINTS" id="PR00789">
    <property type="entry name" value="OSIALOPTASE"/>
</dbReference>
<dbReference type="SUPFAM" id="SSF53067">
    <property type="entry name" value="Actin-like ATPase domain"/>
    <property type="match status" value="2"/>
</dbReference>
<protein>
    <recommendedName>
        <fullName evidence="1">tRNA N6-adenosine threonylcarbamoyltransferase</fullName>
        <ecNumber evidence="1">2.3.1.234</ecNumber>
    </recommendedName>
    <alternativeName>
        <fullName evidence="1">N6-L-threonylcarbamoyladenine synthase</fullName>
        <shortName evidence="1">t(6)A synthase</shortName>
    </alternativeName>
    <alternativeName>
        <fullName evidence="1">t(6)A37 threonylcarbamoyladenosine biosynthesis protein TsaD</fullName>
    </alternativeName>
    <alternativeName>
        <fullName evidence="1">tRNA threonylcarbamoyladenosine biosynthesis protein TsaD</fullName>
    </alternativeName>
</protein>